<protein>
    <recommendedName>
        <fullName>Protein I</fullName>
    </recommendedName>
    <alternativeName>
        <fullName>Accessory protein N2</fullName>
    </alternativeName>
    <alternativeName>
        <fullName>N internal ORF protein</fullName>
        <shortName>IORF</shortName>
    </alternativeName>
    <alternativeName>
        <fullName>Protein in nucleocapsid ORF</fullName>
    </alternativeName>
</protein>
<feature type="chain" id="PRO_0000106119" description="Protein I">
    <location>
        <begin position="1"/>
        <end position="207"/>
    </location>
</feature>
<sequence>MASLSGPISPTNLEMFKPGVEELNPSKLLLLSNHQEGMLYPTILGSLELLSFKRERSLNLLRDKVCLLHQESQLLKLRGTGTDTTDVLLKHAMATSVNCCHDGIFTILEQDRMPKTSMAPTLTESSGSLVTRLMSIPRLTFSIGTQVAMRLFRLGFRLARYSLRVTILKAQEGLLLIPDLLHAHPVEPLVQDRVVEPILAIEPLPLV</sequence>
<reference key="1">
    <citation type="journal article" date="1988" name="Ann. Inst. Pasteur Virol.">
        <title>Sequence and analysis of bovine enteritic coronavirus (F15) genome. I. Sequence of the gene coding for the nucleocapsid protein; analysis of the predicted protein.</title>
        <authorList>
            <person name="Cruciere C."/>
            <person name="Laporte J."/>
        </authorList>
    </citation>
    <scope>NUCLEOTIDE SEQUENCE [GENOMIC RNA]</scope>
</reference>
<dbReference type="EMBL" id="M36656">
    <property type="protein sequence ID" value="AAA42759.1"/>
    <property type="molecule type" value="Genomic_RNA"/>
</dbReference>
<dbReference type="PIR" id="S06869">
    <property type="entry name" value="S06869"/>
</dbReference>
<dbReference type="GO" id="GO:0044423">
    <property type="term" value="C:virion component"/>
    <property type="evidence" value="ECO:0007669"/>
    <property type="project" value="UniProtKB-KW"/>
</dbReference>
<dbReference type="CDD" id="cd21662">
    <property type="entry name" value="embe-CoV_Protein-I_like"/>
    <property type="match status" value="1"/>
</dbReference>
<dbReference type="InterPro" id="IPR004876">
    <property type="entry name" value="Corona_nucI"/>
</dbReference>
<dbReference type="InterPro" id="IPR044311">
    <property type="entry name" value="N2-like_embe-CoV"/>
</dbReference>
<dbReference type="Pfam" id="PF03187">
    <property type="entry name" value="Corona_I"/>
    <property type="match status" value="1"/>
</dbReference>
<organismHost>
    <name type="scientific">Bos taurus</name>
    <name type="common">Bovine</name>
    <dbReference type="NCBI Taxonomy" id="9913"/>
</organismHost>
<organism>
    <name type="scientific">Bovine coronavirus (strain F15)</name>
    <name type="common">BCoV</name>
    <name type="synonym">BCV</name>
    <dbReference type="NCBI Taxonomy" id="11129"/>
    <lineage>
        <taxon>Viruses</taxon>
        <taxon>Riboviria</taxon>
        <taxon>Orthornavirae</taxon>
        <taxon>Pisuviricota</taxon>
        <taxon>Pisoniviricetes</taxon>
        <taxon>Nidovirales</taxon>
        <taxon>Cornidovirineae</taxon>
        <taxon>Coronaviridae</taxon>
        <taxon>Orthocoronavirinae</taxon>
        <taxon>Betacoronavirus</taxon>
        <taxon>Embecovirus</taxon>
        <taxon>Betacoronavirus 1</taxon>
    </lineage>
</organism>
<evidence type="ECO:0000250" key="1"/>
<evidence type="ECO:0000305" key="2"/>
<gene>
    <name type="primary">N</name>
    <name type="synonym">I</name>
    <name type="ORF">7b</name>
</gene>
<accession>P22654</accession>
<name>IORF_CVBF</name>
<proteinExistence type="inferred from homology"/>
<keyword id="KW-0946">Virion</keyword>
<comment type="function">
    <text evidence="1">Structural protein that is not essential for the viral replication either in tissue culture or in its natural host.</text>
</comment>
<comment type="subcellular location">
    <subcellularLocation>
        <location evidence="1">Virion</location>
    </subcellularLocation>
</comment>
<comment type="miscellaneous">
    <text>The gene encoding this protein is included within the N gene (alternative ORF).</text>
</comment>
<comment type="similarity">
    <text evidence="2">Belongs to the coronavirus I protein family.</text>
</comment>